<accession>Q6ZZC6</accession>
<reference key="1">
    <citation type="submission" date="2004-03" db="EMBL/GenBank/DDBJ databases">
        <title>Three two-component regulatory systems of the family PhoR/PhoP control the expression of phosphatases and genes involved in energy metabolism and protein synthesis during Myxococcus xanthus development.</title>
        <authorList>
            <person name="Munoz-Dorado J."/>
            <person name="Carrero-Lerida J."/>
            <person name="Moraleda-Munoz A."/>
            <person name="Perez J."/>
            <person name="Hofmann D."/>
        </authorList>
    </citation>
    <scope>NUCLEOTIDE SEQUENCE [GENOMIC DNA]</scope>
</reference>
<dbReference type="EC" id="1.1.1.37" evidence="1"/>
<dbReference type="EMBL" id="AJ633546">
    <property type="protein sequence ID" value="CAG17588.1"/>
    <property type="molecule type" value="Genomic_DNA"/>
</dbReference>
<dbReference type="RefSeq" id="WP_011553567.1">
    <property type="nucleotide sequence ID" value="NZ_JABFNQ010000006.1"/>
</dbReference>
<dbReference type="SMR" id="Q6ZZC6"/>
<dbReference type="GeneID" id="41360883"/>
<dbReference type="OMA" id="ASCAEYI"/>
<dbReference type="GO" id="GO:0004459">
    <property type="term" value="F:L-lactate dehydrogenase activity"/>
    <property type="evidence" value="ECO:0007669"/>
    <property type="project" value="TreeGrafter"/>
</dbReference>
<dbReference type="GO" id="GO:0030060">
    <property type="term" value="F:L-malate dehydrogenase (NAD+) activity"/>
    <property type="evidence" value="ECO:0007669"/>
    <property type="project" value="UniProtKB-UniRule"/>
</dbReference>
<dbReference type="GO" id="GO:0006089">
    <property type="term" value="P:lactate metabolic process"/>
    <property type="evidence" value="ECO:0007669"/>
    <property type="project" value="TreeGrafter"/>
</dbReference>
<dbReference type="GO" id="GO:0006099">
    <property type="term" value="P:tricarboxylic acid cycle"/>
    <property type="evidence" value="ECO:0007669"/>
    <property type="project" value="UniProtKB-UniRule"/>
</dbReference>
<dbReference type="CDD" id="cd01339">
    <property type="entry name" value="LDH-like_MDH"/>
    <property type="match status" value="1"/>
</dbReference>
<dbReference type="FunFam" id="3.40.50.720:FF:000018">
    <property type="entry name" value="Malate dehydrogenase"/>
    <property type="match status" value="1"/>
</dbReference>
<dbReference type="FunFam" id="3.90.110.10:FF:000004">
    <property type="entry name" value="Malate dehydrogenase"/>
    <property type="match status" value="1"/>
</dbReference>
<dbReference type="Gene3D" id="3.90.110.10">
    <property type="entry name" value="Lactate dehydrogenase/glycoside hydrolase, family 4, C-terminal"/>
    <property type="match status" value="1"/>
</dbReference>
<dbReference type="Gene3D" id="3.40.50.720">
    <property type="entry name" value="NAD(P)-binding Rossmann-like Domain"/>
    <property type="match status" value="1"/>
</dbReference>
<dbReference type="HAMAP" id="MF_00487">
    <property type="entry name" value="Malate_dehydrog_3"/>
    <property type="match status" value="1"/>
</dbReference>
<dbReference type="InterPro" id="IPR001557">
    <property type="entry name" value="L-lactate/malate_DH"/>
</dbReference>
<dbReference type="InterPro" id="IPR022383">
    <property type="entry name" value="Lactate/malate_DH_C"/>
</dbReference>
<dbReference type="InterPro" id="IPR001236">
    <property type="entry name" value="Lactate/malate_DH_N"/>
</dbReference>
<dbReference type="InterPro" id="IPR015955">
    <property type="entry name" value="Lactate_DH/Glyco_Ohase_4_C"/>
</dbReference>
<dbReference type="InterPro" id="IPR011275">
    <property type="entry name" value="Malate_DH_type3"/>
</dbReference>
<dbReference type="InterPro" id="IPR036291">
    <property type="entry name" value="NAD(P)-bd_dom_sf"/>
</dbReference>
<dbReference type="NCBIfam" id="TIGR01763">
    <property type="entry name" value="MalateDH_bact"/>
    <property type="match status" value="1"/>
</dbReference>
<dbReference type="NCBIfam" id="NF004863">
    <property type="entry name" value="PRK06223.1"/>
    <property type="match status" value="1"/>
</dbReference>
<dbReference type="PANTHER" id="PTHR43128">
    <property type="entry name" value="L-2-HYDROXYCARBOXYLATE DEHYDROGENASE (NAD(P)(+))"/>
    <property type="match status" value="1"/>
</dbReference>
<dbReference type="PANTHER" id="PTHR43128:SF16">
    <property type="entry name" value="L-LACTATE DEHYDROGENASE"/>
    <property type="match status" value="1"/>
</dbReference>
<dbReference type="Pfam" id="PF02866">
    <property type="entry name" value="Ldh_1_C"/>
    <property type="match status" value="1"/>
</dbReference>
<dbReference type="Pfam" id="PF00056">
    <property type="entry name" value="Ldh_1_N"/>
    <property type="match status" value="1"/>
</dbReference>
<dbReference type="PIRSF" id="PIRSF000102">
    <property type="entry name" value="Lac_mal_DH"/>
    <property type="match status" value="1"/>
</dbReference>
<dbReference type="PRINTS" id="PR00086">
    <property type="entry name" value="LLDHDRGNASE"/>
</dbReference>
<dbReference type="SUPFAM" id="SSF56327">
    <property type="entry name" value="LDH C-terminal domain-like"/>
    <property type="match status" value="1"/>
</dbReference>
<dbReference type="SUPFAM" id="SSF51735">
    <property type="entry name" value="NAD(P)-binding Rossmann-fold domains"/>
    <property type="match status" value="1"/>
</dbReference>
<proteinExistence type="inferred from homology"/>
<protein>
    <recommendedName>
        <fullName evidence="1">Malate dehydrogenase</fullName>
        <ecNumber evidence="1">1.1.1.37</ecNumber>
    </recommendedName>
</protein>
<comment type="function">
    <text evidence="1">Catalyzes the reversible oxidation of malate to oxaloacetate.</text>
</comment>
<comment type="catalytic activity">
    <reaction evidence="1">
        <text>(S)-malate + NAD(+) = oxaloacetate + NADH + H(+)</text>
        <dbReference type="Rhea" id="RHEA:21432"/>
        <dbReference type="ChEBI" id="CHEBI:15378"/>
        <dbReference type="ChEBI" id="CHEBI:15589"/>
        <dbReference type="ChEBI" id="CHEBI:16452"/>
        <dbReference type="ChEBI" id="CHEBI:57540"/>
        <dbReference type="ChEBI" id="CHEBI:57945"/>
        <dbReference type="EC" id="1.1.1.37"/>
    </reaction>
</comment>
<comment type="similarity">
    <text evidence="1">Belongs to the LDH/MDH superfamily. MDH type 3 family.</text>
</comment>
<gene>
    <name evidence="1" type="primary">mdh</name>
</gene>
<organism>
    <name type="scientific">Myxococcus xanthus</name>
    <dbReference type="NCBI Taxonomy" id="34"/>
    <lineage>
        <taxon>Bacteria</taxon>
        <taxon>Pseudomonadati</taxon>
        <taxon>Myxococcota</taxon>
        <taxon>Myxococcia</taxon>
        <taxon>Myxococcales</taxon>
        <taxon>Cystobacterineae</taxon>
        <taxon>Myxococcaceae</taxon>
        <taxon>Myxococcus</taxon>
    </lineage>
</organism>
<keyword id="KW-0520">NAD</keyword>
<keyword id="KW-0560">Oxidoreductase</keyword>
<keyword id="KW-0816">Tricarboxylic acid cycle</keyword>
<evidence type="ECO:0000255" key="1">
    <source>
        <dbReference type="HAMAP-Rule" id="MF_00487"/>
    </source>
</evidence>
<name>MDH_MYXXA</name>
<sequence>MAQNGKKKIGLIGGGQIGGNLALLAVQKSLGDVVLYDIPAAEGLVKGKALDINQLAAVDGYDCRVKGTTDWKDVAGSDVIIITAGMPRKPGMSREDLLEINLKIMTDVAGNIKQHAPNAFVINVANPLDAMVFALHKIAGLPKHMVAGMAGVLDTSRFKCFVAEALGCSIRDVEALVLGGHGDDMVPLVRHSTVGGVPLTELIAKDKLDAIIKRTREGGAELVGLYKTGSAYFGPAASAIAMAESFLQDRKRVLPAAALLEGQYGINGYFFGVPVQIGAGGVEKIHTVELNDGEKAELEKSFQSVKKTVDSVKL</sequence>
<feature type="chain" id="PRO_0000113458" description="Malate dehydrogenase">
    <location>
        <begin position="1"/>
        <end position="314"/>
    </location>
</feature>
<feature type="active site" description="Proton acceptor" evidence="1">
    <location>
        <position position="181"/>
    </location>
</feature>
<feature type="binding site" evidence="1">
    <location>
        <begin position="13"/>
        <end position="18"/>
    </location>
    <ligand>
        <name>NAD(+)</name>
        <dbReference type="ChEBI" id="CHEBI:57540"/>
    </ligand>
</feature>
<feature type="binding site" evidence="1">
    <location>
        <position position="37"/>
    </location>
    <ligand>
        <name>NAD(+)</name>
        <dbReference type="ChEBI" id="CHEBI:57540"/>
    </ligand>
</feature>
<feature type="binding site" evidence="1">
    <location>
        <position position="88"/>
    </location>
    <ligand>
        <name>substrate</name>
    </ligand>
</feature>
<feature type="binding site" evidence="1">
    <location>
        <position position="94"/>
    </location>
    <ligand>
        <name>substrate</name>
    </ligand>
</feature>
<feature type="binding site" evidence="1">
    <location>
        <position position="101"/>
    </location>
    <ligand>
        <name>NAD(+)</name>
        <dbReference type="ChEBI" id="CHEBI:57540"/>
    </ligand>
</feature>
<feature type="binding site" evidence="1">
    <location>
        <begin position="124"/>
        <end position="126"/>
    </location>
    <ligand>
        <name>NAD(+)</name>
        <dbReference type="ChEBI" id="CHEBI:57540"/>
    </ligand>
</feature>
<feature type="binding site" evidence="1">
    <location>
        <position position="126"/>
    </location>
    <ligand>
        <name>substrate</name>
    </ligand>
</feature>
<feature type="binding site" evidence="1">
    <location>
        <position position="157"/>
    </location>
    <ligand>
        <name>substrate</name>
    </ligand>
</feature>